<reference key="1">
    <citation type="journal article" date="2004" name="Nucleic Acids Res.">
        <title>Whole genome comparisons of serotype 4b and 1/2a strains of the food-borne pathogen Listeria monocytogenes reveal new insights into the core genome components of this species.</title>
        <authorList>
            <person name="Nelson K.E."/>
            <person name="Fouts D.E."/>
            <person name="Mongodin E.F."/>
            <person name="Ravel J."/>
            <person name="DeBoy R.T."/>
            <person name="Kolonay J.F."/>
            <person name="Rasko D.A."/>
            <person name="Angiuoli S.V."/>
            <person name="Gill S.R."/>
            <person name="Paulsen I.T."/>
            <person name="Peterson J.D."/>
            <person name="White O."/>
            <person name="Nelson W.C."/>
            <person name="Nierman W.C."/>
            <person name="Beanan M.J."/>
            <person name="Brinkac L.M."/>
            <person name="Daugherty S.C."/>
            <person name="Dodson R.J."/>
            <person name="Durkin A.S."/>
            <person name="Madupu R."/>
            <person name="Haft D.H."/>
            <person name="Selengut J."/>
            <person name="Van Aken S.E."/>
            <person name="Khouri H.M."/>
            <person name="Fedorova N."/>
            <person name="Forberger H.A."/>
            <person name="Tran B."/>
            <person name="Kathariou S."/>
            <person name="Wonderling L.D."/>
            <person name="Uhlich G.A."/>
            <person name="Bayles D.O."/>
            <person name="Luchansky J.B."/>
            <person name="Fraser C.M."/>
        </authorList>
    </citation>
    <scope>NUCLEOTIDE SEQUENCE [LARGE SCALE GENOMIC DNA]</scope>
    <source>
        <strain>F2365</strain>
    </source>
</reference>
<evidence type="ECO:0000255" key="1">
    <source>
        <dbReference type="HAMAP-Rule" id="MF_00457"/>
    </source>
</evidence>
<keyword id="KW-0378">Hydrolase</keyword>
<dbReference type="EMBL" id="AE017262">
    <property type="protein sequence ID" value="AAT04374.1"/>
    <property type="molecule type" value="Genomic_DNA"/>
</dbReference>
<dbReference type="RefSeq" id="WP_010958913.1">
    <property type="nucleotide sequence ID" value="NC_002973.6"/>
</dbReference>
<dbReference type="SMR" id="Q71Z90"/>
<dbReference type="KEGG" id="lmf:LMOf2365_1599"/>
<dbReference type="HOGENOM" id="CLU_070010_4_1_9"/>
<dbReference type="GO" id="GO:0016787">
    <property type="term" value="F:hydrolase activity"/>
    <property type="evidence" value="ECO:0007669"/>
    <property type="project" value="UniProtKB-UniRule"/>
</dbReference>
<dbReference type="Gene3D" id="3.60.15.10">
    <property type="entry name" value="Ribonuclease Z/Hydroxyacylglutathione hydrolase-like"/>
    <property type="match status" value="1"/>
</dbReference>
<dbReference type="HAMAP" id="MF_00457">
    <property type="entry name" value="UPF0173"/>
    <property type="match status" value="1"/>
</dbReference>
<dbReference type="InterPro" id="IPR001279">
    <property type="entry name" value="Metallo-B-lactamas"/>
</dbReference>
<dbReference type="InterPro" id="IPR036866">
    <property type="entry name" value="RibonucZ/Hydroxyglut_hydro"/>
</dbReference>
<dbReference type="InterPro" id="IPR022877">
    <property type="entry name" value="UPF0173"/>
</dbReference>
<dbReference type="InterPro" id="IPR050114">
    <property type="entry name" value="UPF0173_UPF0282_UlaG_hydrolase"/>
</dbReference>
<dbReference type="NCBIfam" id="NF001911">
    <property type="entry name" value="PRK00685.1"/>
    <property type="match status" value="1"/>
</dbReference>
<dbReference type="PANTHER" id="PTHR43546:SF3">
    <property type="entry name" value="UPF0173 METAL-DEPENDENT HYDROLASE MJ1163"/>
    <property type="match status" value="1"/>
</dbReference>
<dbReference type="PANTHER" id="PTHR43546">
    <property type="entry name" value="UPF0173 METAL-DEPENDENT HYDROLASE MJ1163-RELATED"/>
    <property type="match status" value="1"/>
</dbReference>
<dbReference type="Pfam" id="PF12706">
    <property type="entry name" value="Lactamase_B_2"/>
    <property type="match status" value="1"/>
</dbReference>
<dbReference type="SMART" id="SM00849">
    <property type="entry name" value="Lactamase_B"/>
    <property type="match status" value="1"/>
</dbReference>
<dbReference type="SUPFAM" id="SSF56281">
    <property type="entry name" value="Metallo-hydrolase/oxidoreductase"/>
    <property type="match status" value="1"/>
</dbReference>
<accession>Q71Z90</accession>
<organism>
    <name type="scientific">Listeria monocytogenes serotype 4b (strain F2365)</name>
    <dbReference type="NCBI Taxonomy" id="265669"/>
    <lineage>
        <taxon>Bacteria</taxon>
        <taxon>Bacillati</taxon>
        <taxon>Bacillota</taxon>
        <taxon>Bacilli</taxon>
        <taxon>Bacillales</taxon>
        <taxon>Listeriaceae</taxon>
        <taxon>Listeria</taxon>
    </lineage>
</organism>
<sequence length="228" mass="24647">MKISFHGQSCIKIITGDTTILVDPFISGNDKCDLKAEEQMPDFIVLSHGHDDHVGDTVEIAKNSGATVICNADLASFLAVEDGLENIAPMHIGGKRQFSFGQVKLTQAFHGSQTVRDGRIVNLGFPTGIVFTIEDKNIYFAGDTGLFSDMKLIGELNPLDVAFLPIGDNFTMGPEDAAIAARFLQAKLVVPMHYNTFPLIAQDPHKFVASLDEGITGKVLEIGEGIEI</sequence>
<gene>
    <name type="ordered locus">LMOf2365_1599</name>
</gene>
<name>Y1599_LISMF</name>
<proteinExistence type="inferred from homology"/>
<protein>
    <recommendedName>
        <fullName evidence="1">UPF0173 metal-dependent hydrolase LMOf2365_1599</fullName>
    </recommendedName>
</protein>
<comment type="similarity">
    <text evidence="1">Belongs to the UPF0173 family.</text>
</comment>
<feature type="chain" id="PRO_0000156377" description="UPF0173 metal-dependent hydrolase LMOf2365_1599">
    <location>
        <begin position="1"/>
        <end position="228"/>
    </location>
</feature>